<gene>
    <name type="primary">GPLD1</name>
    <name type="synonym">PIGPLD1</name>
</gene>
<comment type="function">
    <text>This protein hydrolyzes the inositol phosphate linkage in proteins anchored by phosphatidylinositol glycans (GPI-anchor) thus releasing these proteins from the membrane.</text>
</comment>
<comment type="catalytic activity">
    <reaction>
        <text>a 6-(alpha-D-glucosaminyl)-1-(1,2-diacyl-sn-glycero-3-phospho)-1D-myo-inositol + H2O = 6-(alpha-D-glucosaminyl)-1D-myo-inositol + a 1,2-diacyl-sn-glycero-3-phosphate + H(+)</text>
        <dbReference type="Rhea" id="RHEA:10832"/>
        <dbReference type="ChEBI" id="CHEBI:15377"/>
        <dbReference type="ChEBI" id="CHEBI:15378"/>
        <dbReference type="ChEBI" id="CHEBI:57997"/>
        <dbReference type="ChEBI" id="CHEBI:58608"/>
        <dbReference type="ChEBI" id="CHEBI:58700"/>
        <dbReference type="EC" id="3.1.4.50"/>
    </reaction>
</comment>
<comment type="subunit">
    <text evidence="10">Monomer.</text>
</comment>
<comment type="subcellular location">
    <subcellularLocation>
        <location>Secreted</location>
    </subcellularLocation>
</comment>
<comment type="alternative products">
    <event type="alternative splicing"/>
    <isoform>
        <id>P80108-1</id>
        <name>1</name>
        <sequence type="displayed"/>
    </isoform>
    <isoform>
        <id>P80108-2</id>
        <name>2</name>
        <sequence type="described" ref="VSP_023261 VSP_023262"/>
    </isoform>
</comment>
<comment type="similarity">
    <text evidence="10">Belongs to the GPLD1 family.</text>
</comment>
<comment type="sequence caution" evidence="10">
    <conflict type="miscellaneous discrepancy">
        <sequence resource="EMBL-CDS" id="AAA36444"/>
    </conflict>
    <text>This sequence has numerous of conflicts with the human genome.</text>
</comment>
<keyword id="KW-0025">Alternative splicing</keyword>
<keyword id="KW-0903">Direct protein sequencing</keyword>
<keyword id="KW-0325">Glycoprotein</keyword>
<keyword id="KW-0378">Hydrolase</keyword>
<keyword id="KW-0443">Lipid metabolism</keyword>
<keyword id="KW-1267">Proteomics identification</keyword>
<keyword id="KW-1185">Reference proteome</keyword>
<keyword id="KW-0677">Repeat</keyword>
<keyword id="KW-0964">Secreted</keyword>
<keyword id="KW-0732">Signal</keyword>
<name>PHLD_HUMAN</name>
<reference key="1">
    <citation type="journal article" date="1992" name="FASEB J.">
        <title>Isolation and expression of two human glycosylphosphatidylinositol phospholipase D (GPI-PLD) cDNAs.</title>
        <authorList>
            <person name="Tsang T.C."/>
            <person name="Fung W.-J.C."/>
            <person name="Levine J."/>
            <person name="Metz C.N."/>
            <person name="Davitz M.A."/>
            <person name="Burns D.K."/>
            <person name="Huang K.-S."/>
            <person name="Kochan J.P."/>
        </authorList>
    </citation>
    <scope>NUCLEOTIDE SEQUENCE [MRNA] (ISOFORM 1)</scope>
    <scope>VARIANTS ILE-30; VAL-350; MET-461 AND ILE-698</scope>
    <source>
        <tissue>Liver</tissue>
        <tissue>Pancreas</tissue>
    </source>
</reference>
<reference key="2">
    <citation type="journal article" date="2000" name="Biochim. Biophys. Acta">
        <title>Structure and expression of the human glycosylphosphatidylinositol phospholipase D1 (GPLD1) gene.</title>
        <authorList>
            <person name="Schofield J.N."/>
            <person name="Rademacher T.W."/>
        </authorList>
    </citation>
    <scope>NUCLEOTIDE SEQUENCE [MRNA] (ISOFORM 1)</scope>
    <scope>NUCLEOTIDE SEQUENCE [GENOMIC DNA] OF 384-840</scope>
    <scope>VARIANTS ILE-30; VAL-694 AND ILE-698</scope>
    <source>
        <tissue>Liver</tissue>
    </source>
</reference>
<reference key="3">
    <citation type="journal article" date="2001" name="Hunan Yi Ke Da Xue Xue Bao">
        <title>Preliminary study of the gene structure of human glycosylphosphatidylinositol specific phospholipase D.</title>
        <authorList>
            <person name="Tang J.H."/>
            <person name="Gu S.L."/>
            <person name="Zhang X.J."/>
        </authorList>
    </citation>
    <scope>NUCLEOTIDE SEQUENCE [MRNA] (ISOFORM 1)</scope>
    <scope>VARIANT ILE-698</scope>
    <source>
        <tissue>Bone marrow</tissue>
    </source>
</reference>
<reference key="4">
    <citation type="journal article" date="2003" name="Nature">
        <title>The DNA sequence and analysis of human chromosome 6.</title>
        <authorList>
            <person name="Mungall A.J."/>
            <person name="Palmer S.A."/>
            <person name="Sims S.K."/>
            <person name="Edwards C.A."/>
            <person name="Ashurst J.L."/>
            <person name="Wilming L."/>
            <person name="Jones M.C."/>
            <person name="Horton R."/>
            <person name="Hunt S.E."/>
            <person name="Scott C.E."/>
            <person name="Gilbert J.G.R."/>
            <person name="Clamp M.E."/>
            <person name="Bethel G."/>
            <person name="Milne S."/>
            <person name="Ainscough R."/>
            <person name="Almeida J.P."/>
            <person name="Ambrose K.D."/>
            <person name="Andrews T.D."/>
            <person name="Ashwell R.I.S."/>
            <person name="Babbage A.K."/>
            <person name="Bagguley C.L."/>
            <person name="Bailey J."/>
            <person name="Banerjee R."/>
            <person name="Barker D.J."/>
            <person name="Barlow K.F."/>
            <person name="Bates K."/>
            <person name="Beare D.M."/>
            <person name="Beasley H."/>
            <person name="Beasley O."/>
            <person name="Bird C.P."/>
            <person name="Blakey S.E."/>
            <person name="Bray-Allen S."/>
            <person name="Brook J."/>
            <person name="Brown A.J."/>
            <person name="Brown J.Y."/>
            <person name="Burford D.C."/>
            <person name="Burrill W."/>
            <person name="Burton J."/>
            <person name="Carder C."/>
            <person name="Carter N.P."/>
            <person name="Chapman J.C."/>
            <person name="Clark S.Y."/>
            <person name="Clark G."/>
            <person name="Clee C.M."/>
            <person name="Clegg S."/>
            <person name="Cobley V."/>
            <person name="Collier R.E."/>
            <person name="Collins J.E."/>
            <person name="Colman L.K."/>
            <person name="Corby N.R."/>
            <person name="Coville G.J."/>
            <person name="Culley K.M."/>
            <person name="Dhami P."/>
            <person name="Davies J."/>
            <person name="Dunn M."/>
            <person name="Earthrowl M.E."/>
            <person name="Ellington A.E."/>
            <person name="Evans K.A."/>
            <person name="Faulkner L."/>
            <person name="Francis M.D."/>
            <person name="Frankish A."/>
            <person name="Frankland J."/>
            <person name="French L."/>
            <person name="Garner P."/>
            <person name="Garnett J."/>
            <person name="Ghori M.J."/>
            <person name="Gilby L.M."/>
            <person name="Gillson C.J."/>
            <person name="Glithero R.J."/>
            <person name="Grafham D.V."/>
            <person name="Grant M."/>
            <person name="Gribble S."/>
            <person name="Griffiths C."/>
            <person name="Griffiths M.N.D."/>
            <person name="Hall R."/>
            <person name="Halls K.S."/>
            <person name="Hammond S."/>
            <person name="Harley J.L."/>
            <person name="Hart E.A."/>
            <person name="Heath P.D."/>
            <person name="Heathcott R."/>
            <person name="Holmes S.J."/>
            <person name="Howden P.J."/>
            <person name="Howe K.L."/>
            <person name="Howell G.R."/>
            <person name="Huckle E."/>
            <person name="Humphray S.J."/>
            <person name="Humphries M.D."/>
            <person name="Hunt A.R."/>
            <person name="Johnson C.M."/>
            <person name="Joy A.A."/>
            <person name="Kay M."/>
            <person name="Keenan S.J."/>
            <person name="Kimberley A.M."/>
            <person name="King A."/>
            <person name="Laird G.K."/>
            <person name="Langford C."/>
            <person name="Lawlor S."/>
            <person name="Leongamornlert D.A."/>
            <person name="Leversha M."/>
            <person name="Lloyd C.R."/>
            <person name="Lloyd D.M."/>
            <person name="Loveland J.E."/>
            <person name="Lovell J."/>
            <person name="Martin S."/>
            <person name="Mashreghi-Mohammadi M."/>
            <person name="Maslen G.L."/>
            <person name="Matthews L."/>
            <person name="McCann O.T."/>
            <person name="McLaren S.J."/>
            <person name="McLay K."/>
            <person name="McMurray A."/>
            <person name="Moore M.J.F."/>
            <person name="Mullikin J.C."/>
            <person name="Niblett D."/>
            <person name="Nickerson T."/>
            <person name="Novik K.L."/>
            <person name="Oliver K."/>
            <person name="Overton-Larty E.K."/>
            <person name="Parker A."/>
            <person name="Patel R."/>
            <person name="Pearce A.V."/>
            <person name="Peck A.I."/>
            <person name="Phillimore B.J.C.T."/>
            <person name="Phillips S."/>
            <person name="Plumb R.W."/>
            <person name="Porter K.M."/>
            <person name="Ramsey Y."/>
            <person name="Ranby S.A."/>
            <person name="Rice C.M."/>
            <person name="Ross M.T."/>
            <person name="Searle S.M."/>
            <person name="Sehra H.K."/>
            <person name="Sheridan E."/>
            <person name="Skuce C.D."/>
            <person name="Smith S."/>
            <person name="Smith M."/>
            <person name="Spraggon L."/>
            <person name="Squares S.L."/>
            <person name="Steward C.A."/>
            <person name="Sycamore N."/>
            <person name="Tamlyn-Hall G."/>
            <person name="Tester J."/>
            <person name="Theaker A.J."/>
            <person name="Thomas D.W."/>
            <person name="Thorpe A."/>
            <person name="Tracey A."/>
            <person name="Tromans A."/>
            <person name="Tubby B."/>
            <person name="Wall M."/>
            <person name="Wallis J.M."/>
            <person name="West A.P."/>
            <person name="White S.S."/>
            <person name="Whitehead S.L."/>
            <person name="Whittaker H."/>
            <person name="Wild A."/>
            <person name="Willey D.J."/>
            <person name="Wilmer T.E."/>
            <person name="Wood J.M."/>
            <person name="Wray P.W."/>
            <person name="Wyatt J.C."/>
            <person name="Young L."/>
            <person name="Younger R.M."/>
            <person name="Bentley D.R."/>
            <person name="Coulson A."/>
            <person name="Durbin R.M."/>
            <person name="Hubbard T."/>
            <person name="Sulston J.E."/>
            <person name="Dunham I."/>
            <person name="Rogers J."/>
            <person name="Beck S."/>
        </authorList>
    </citation>
    <scope>NUCLEOTIDE SEQUENCE [LARGE SCALE GENOMIC DNA]</scope>
</reference>
<reference key="5">
    <citation type="journal article" date="2004" name="Genome Res.">
        <title>The status, quality, and expansion of the NIH full-length cDNA project: the Mammalian Gene Collection (MGC).</title>
        <authorList>
            <consortium name="The MGC Project Team"/>
        </authorList>
    </citation>
    <scope>NUCLEOTIDE SEQUENCE [LARGE SCALE MRNA] (ISOFORM 2)</scope>
    <scope>NUCLEOTIDE SEQUENCE [LARGE SCALE MRNA] OF 266-840 (ISOFORM 1)</scope>
    <scope>VARIANTS VAL-17; ILE-30 AND ILE-698</scope>
    <source>
        <tissue>Eye</tissue>
        <tissue>Liver</tissue>
    </source>
</reference>
<reference key="6">
    <citation type="journal article" date="1992" name="Eur. J. Biochem.">
        <title>Phosphatidylinositol-glycan-specific phospholipase D is an amphiphilic glycoprotein that in serum is associated with high-density lipoproteins.</title>
        <authorList>
            <person name="Hoener M.C."/>
            <person name="Brodbeck U."/>
        </authorList>
    </citation>
    <scope>PARTIAL PROTEIN SEQUENCE</scope>
    <source>
        <tissue>Serum</tissue>
    </source>
</reference>
<reference key="7">
    <citation type="journal article" date="2005" name="J. Proteome Res.">
        <title>Human plasma N-glycoproteome analysis by immunoaffinity subtraction, hydrazide chemistry, and mass spectrometry.</title>
        <authorList>
            <person name="Liu T."/>
            <person name="Qian W.-J."/>
            <person name="Gritsenko M.A."/>
            <person name="Camp D.G. II"/>
            <person name="Monroe M.E."/>
            <person name="Moore R.J."/>
            <person name="Smith R.D."/>
        </authorList>
    </citation>
    <scope>GLYCOSYLATION [LARGE SCALE ANALYSIS] AT ASN-94</scope>
    <source>
        <tissue>Plasma</tissue>
    </source>
</reference>
<reference key="8">
    <citation type="journal article" date="2009" name="J. Proteome Res.">
        <title>Glycoproteomics analysis of human liver tissue by combination of multiple enzyme digestion and hydrazide chemistry.</title>
        <authorList>
            <person name="Chen R."/>
            <person name="Jiang X."/>
            <person name="Sun D."/>
            <person name="Han G."/>
            <person name="Wang F."/>
            <person name="Ye M."/>
            <person name="Wang L."/>
            <person name="Zou H."/>
        </authorList>
    </citation>
    <scope>GLYCOSYLATION [LARGE SCALE ANALYSIS] AT ASN-659</scope>
    <source>
        <tissue>Liver</tissue>
    </source>
</reference>
<accession>P80108</accession>
<accession>Q15127</accession>
<accession>Q15128</accession>
<accession>Q2M2F2</accession>
<accession>Q5T3Y0</accession>
<accession>Q7Z6T8</accession>
<accession>Q8TCV0</accession>
<accession>Q8WW82</accession>
<accession>Q96ID6</accession>
<accession>Q9H167</accession>
<accession>Q9H4M1</accession>
<accession>Q9UJC9</accession>
<dbReference type="EC" id="3.1.4.50"/>
<dbReference type="EMBL" id="L11701">
    <property type="protein sequence ID" value="AAA36444.1"/>
    <property type="status" value="ALT_SEQ"/>
    <property type="molecule type" value="mRNA"/>
</dbReference>
<dbReference type="EMBL" id="L11702">
    <property type="protein sequence ID" value="AAA36445.1"/>
    <property type="molecule type" value="mRNA"/>
</dbReference>
<dbReference type="EMBL" id="AJ308108">
    <property type="protein sequence ID" value="CAC87068.1"/>
    <property type="molecule type" value="mRNA"/>
</dbReference>
<dbReference type="EMBL" id="AJ400872">
    <property type="protein sequence ID" value="CAC14844.1"/>
    <property type="molecule type" value="Genomic_DNA"/>
</dbReference>
<dbReference type="EMBL" id="AJ400873">
    <property type="protein sequence ID" value="CAC14844.1"/>
    <property type="status" value="JOINED"/>
    <property type="molecule type" value="Genomic_DNA"/>
</dbReference>
<dbReference type="EMBL" id="AJ400874">
    <property type="protein sequence ID" value="CAC14844.1"/>
    <property type="status" value="JOINED"/>
    <property type="molecule type" value="Genomic_DNA"/>
</dbReference>
<dbReference type="EMBL" id="AJ400875">
    <property type="protein sequence ID" value="CAC14844.1"/>
    <property type="status" value="JOINED"/>
    <property type="molecule type" value="Genomic_DNA"/>
</dbReference>
<dbReference type="EMBL" id="AJ400876">
    <property type="protein sequence ID" value="CAC14844.1"/>
    <property type="status" value="JOINED"/>
    <property type="molecule type" value="Genomic_DNA"/>
</dbReference>
<dbReference type="EMBL" id="AY007546">
    <property type="protein sequence ID" value="AAG16627.2"/>
    <property type="molecule type" value="mRNA"/>
</dbReference>
<dbReference type="EMBL" id="AL359713">
    <property type="protein sequence ID" value="CAI17103.1"/>
    <property type="molecule type" value="Genomic_DNA"/>
</dbReference>
<dbReference type="EMBL" id="AL031230">
    <property type="protein sequence ID" value="CAI17103.1"/>
    <property type="status" value="JOINED"/>
    <property type="molecule type" value="Genomic_DNA"/>
</dbReference>
<dbReference type="EMBL" id="AL031230">
    <property type="protein sequence ID" value="CAI22602.1"/>
    <property type="molecule type" value="Genomic_DNA"/>
</dbReference>
<dbReference type="EMBL" id="AL359713">
    <property type="protein sequence ID" value="CAI22602.1"/>
    <property type="status" value="JOINED"/>
    <property type="molecule type" value="Genomic_DNA"/>
</dbReference>
<dbReference type="EMBL" id="AL031230">
    <property type="protein sequence ID" value="CAD92520.1"/>
    <property type="molecule type" value="Genomic_DNA"/>
</dbReference>
<dbReference type="EMBL" id="BC007614">
    <property type="protein sequence ID" value="AAH07614.1"/>
    <property type="molecule type" value="mRNA"/>
</dbReference>
<dbReference type="EMBL" id="BC020748">
    <property type="protein sequence ID" value="AAH20748.1"/>
    <property type="molecule type" value="mRNA"/>
</dbReference>
<dbReference type="EMBL" id="BC093645">
    <property type="protein sequence ID" value="AAH93645.1"/>
    <property type="molecule type" value="mRNA"/>
</dbReference>
<dbReference type="EMBL" id="BC112001">
    <property type="protein sequence ID" value="AAI12002.1"/>
    <property type="molecule type" value="mRNA"/>
</dbReference>
<dbReference type="CCDS" id="CCDS4553.1">
    <molecule id="P80108-1"/>
</dbReference>
<dbReference type="RefSeq" id="NP_001494.2">
    <molecule id="P80108-1"/>
    <property type="nucleotide sequence ID" value="NM_001503.3"/>
</dbReference>
<dbReference type="BioGRID" id="109083">
    <property type="interactions" value="9"/>
</dbReference>
<dbReference type="FunCoup" id="P80108">
    <property type="interactions" value="125"/>
</dbReference>
<dbReference type="IntAct" id="P80108">
    <property type="interactions" value="2"/>
</dbReference>
<dbReference type="STRING" id="9606.ENSP00000230036"/>
<dbReference type="GlyConnect" id="1601">
    <property type="glycosylation" value="16 N-Linked glycans (4 sites)"/>
</dbReference>
<dbReference type="GlyCosmos" id="P80108">
    <property type="glycosylation" value="10 sites, 20 glycans"/>
</dbReference>
<dbReference type="GlyGen" id="P80108">
    <property type="glycosylation" value="10 sites, 39 N-linked glycans (4 sites)"/>
</dbReference>
<dbReference type="iPTMnet" id="P80108"/>
<dbReference type="PhosphoSitePlus" id="P80108"/>
<dbReference type="BioMuta" id="GPLD1"/>
<dbReference type="DMDM" id="126302583"/>
<dbReference type="CPTAC" id="CPTAC-2231"/>
<dbReference type="MassIVE" id="P80108"/>
<dbReference type="PaxDb" id="9606-ENSP00000230036"/>
<dbReference type="PeptideAtlas" id="P80108"/>
<dbReference type="ProteomicsDB" id="57666">
    <molecule id="P80108-1"/>
</dbReference>
<dbReference type="ProteomicsDB" id="57667">
    <molecule id="P80108-2"/>
</dbReference>
<dbReference type="Antibodypedia" id="1368">
    <property type="antibodies" value="281 antibodies from 29 providers"/>
</dbReference>
<dbReference type="DNASU" id="2822"/>
<dbReference type="Ensembl" id="ENST00000230036.2">
    <molecule id="P80108-1"/>
    <property type="protein sequence ID" value="ENSP00000230036.1"/>
    <property type="gene ID" value="ENSG00000112293.15"/>
</dbReference>
<dbReference type="GeneID" id="2822"/>
<dbReference type="KEGG" id="hsa:2822"/>
<dbReference type="MANE-Select" id="ENST00000230036.2">
    <property type="protein sequence ID" value="ENSP00000230036.1"/>
    <property type="RefSeq nucleotide sequence ID" value="NM_001503.4"/>
    <property type="RefSeq protein sequence ID" value="NP_001494.2"/>
</dbReference>
<dbReference type="UCSC" id="uc003ned.3">
    <molecule id="P80108-1"/>
    <property type="organism name" value="human"/>
</dbReference>
<dbReference type="AGR" id="HGNC:4459"/>
<dbReference type="CTD" id="2822"/>
<dbReference type="DisGeNET" id="2822"/>
<dbReference type="GeneCards" id="GPLD1"/>
<dbReference type="HGNC" id="HGNC:4459">
    <property type="gene designation" value="GPLD1"/>
</dbReference>
<dbReference type="HPA" id="ENSG00000112293">
    <property type="expression patterns" value="Tissue enriched (liver)"/>
</dbReference>
<dbReference type="MalaCards" id="GPLD1"/>
<dbReference type="MIM" id="602515">
    <property type="type" value="gene"/>
</dbReference>
<dbReference type="neXtProt" id="NX_P80108"/>
<dbReference type="OpenTargets" id="ENSG00000112293"/>
<dbReference type="PharmGKB" id="PA28842"/>
<dbReference type="VEuPathDB" id="HostDB:ENSG00000112293"/>
<dbReference type="eggNOG" id="KOG3637">
    <property type="taxonomic scope" value="Eukaryota"/>
</dbReference>
<dbReference type="GeneTree" id="ENSGT00390000013522"/>
<dbReference type="HOGENOM" id="CLU_011756_0_0_1"/>
<dbReference type="InParanoid" id="P80108"/>
<dbReference type="OMA" id="CGMTTHN"/>
<dbReference type="OrthoDB" id="5317514at2759"/>
<dbReference type="PAN-GO" id="P80108">
    <property type="GO annotations" value="4 GO annotations based on evolutionary models"/>
</dbReference>
<dbReference type="PhylomeDB" id="P80108"/>
<dbReference type="TreeFam" id="TF335726"/>
<dbReference type="BRENDA" id="3.1.4.50">
    <property type="organism ID" value="2681"/>
</dbReference>
<dbReference type="PathwayCommons" id="P80108"/>
<dbReference type="Reactome" id="R-HSA-163125">
    <property type="pathway name" value="Post-translational modification: synthesis of GPI-anchored proteins"/>
</dbReference>
<dbReference type="SignaLink" id="P80108"/>
<dbReference type="BioGRID-ORCS" id="2822">
    <property type="hits" value="6 hits in 1150 CRISPR screens"/>
</dbReference>
<dbReference type="ChiTaRS" id="GPLD1">
    <property type="organism name" value="human"/>
</dbReference>
<dbReference type="GeneWiki" id="GPLD1"/>
<dbReference type="GenomeRNAi" id="2822"/>
<dbReference type="Pharos" id="P80108">
    <property type="development level" value="Tbio"/>
</dbReference>
<dbReference type="PRO" id="PR:P80108"/>
<dbReference type="Proteomes" id="UP000005640">
    <property type="component" value="Chromosome 6"/>
</dbReference>
<dbReference type="RNAct" id="P80108">
    <property type="molecule type" value="protein"/>
</dbReference>
<dbReference type="Bgee" id="ENSG00000112293">
    <property type="expression patterns" value="Expressed in secondary oocyte and 153 other cell types or tissues"/>
</dbReference>
<dbReference type="GO" id="GO:0005737">
    <property type="term" value="C:cytoplasm"/>
    <property type="evidence" value="ECO:0000314"/>
    <property type="project" value="UniProtKB"/>
</dbReference>
<dbReference type="GO" id="GO:0070062">
    <property type="term" value="C:extracellular exosome"/>
    <property type="evidence" value="ECO:0007005"/>
    <property type="project" value="UniProtKB"/>
</dbReference>
<dbReference type="GO" id="GO:0031012">
    <property type="term" value="C:extracellular matrix"/>
    <property type="evidence" value="ECO:0000250"/>
    <property type="project" value="UniProtKB"/>
</dbReference>
<dbReference type="GO" id="GO:0005576">
    <property type="term" value="C:extracellular region"/>
    <property type="evidence" value="ECO:0000304"/>
    <property type="project" value="Reactome"/>
</dbReference>
<dbReference type="GO" id="GO:0005615">
    <property type="term" value="C:extracellular space"/>
    <property type="evidence" value="ECO:0000314"/>
    <property type="project" value="UniProtKB"/>
</dbReference>
<dbReference type="GO" id="GO:0043231">
    <property type="term" value="C:intracellular membrane-bounded organelle"/>
    <property type="evidence" value="ECO:0000314"/>
    <property type="project" value="UniProtKB"/>
</dbReference>
<dbReference type="GO" id="GO:0005765">
    <property type="term" value="C:lysosomal membrane"/>
    <property type="evidence" value="ECO:0007005"/>
    <property type="project" value="UniProtKB"/>
</dbReference>
<dbReference type="GO" id="GO:0004621">
    <property type="term" value="F:glycosylphosphatidylinositol phospholipase D activity"/>
    <property type="evidence" value="ECO:0000314"/>
    <property type="project" value="UniProtKB"/>
</dbReference>
<dbReference type="GO" id="GO:0004630">
    <property type="term" value="F:phospholipase D activity"/>
    <property type="evidence" value="ECO:0000314"/>
    <property type="project" value="UniProtKB"/>
</dbReference>
<dbReference type="GO" id="GO:0017080">
    <property type="term" value="F:sodium channel regulator activity"/>
    <property type="evidence" value="ECO:0000250"/>
    <property type="project" value="UniProtKB"/>
</dbReference>
<dbReference type="GO" id="GO:0002042">
    <property type="term" value="P:cell migration involved in sprouting angiogenesis"/>
    <property type="evidence" value="ECO:0000315"/>
    <property type="project" value="UniProtKB"/>
</dbReference>
<dbReference type="GO" id="GO:0071397">
    <property type="term" value="P:cellular response to cholesterol"/>
    <property type="evidence" value="ECO:0000315"/>
    <property type="project" value="UniProtKB"/>
</dbReference>
<dbReference type="GO" id="GO:0032869">
    <property type="term" value="P:cellular response to insulin stimulus"/>
    <property type="evidence" value="ECO:0000314"/>
    <property type="project" value="UniProtKB"/>
</dbReference>
<dbReference type="GO" id="GO:0071467">
    <property type="term" value="P:cellular response to pH"/>
    <property type="evidence" value="ECO:0000314"/>
    <property type="project" value="UniProtKB"/>
</dbReference>
<dbReference type="GO" id="GO:0071401">
    <property type="term" value="P:cellular response to triglyceride"/>
    <property type="evidence" value="ECO:0000315"/>
    <property type="project" value="UniProtKB"/>
</dbReference>
<dbReference type="GO" id="GO:0071466">
    <property type="term" value="P:cellular response to xenobiotic stimulus"/>
    <property type="evidence" value="ECO:0000314"/>
    <property type="project" value="UniProtKB"/>
</dbReference>
<dbReference type="GO" id="GO:0002062">
    <property type="term" value="P:chondrocyte differentiation"/>
    <property type="evidence" value="ECO:0000250"/>
    <property type="project" value="UniProtKB"/>
</dbReference>
<dbReference type="GO" id="GO:0002430">
    <property type="term" value="P:complement receptor mediated signaling pathway"/>
    <property type="evidence" value="ECO:0000314"/>
    <property type="project" value="UniProtKB"/>
</dbReference>
<dbReference type="GO" id="GO:0035701">
    <property type="term" value="P:hematopoietic stem cell migration"/>
    <property type="evidence" value="ECO:0000304"/>
    <property type="project" value="UniProtKB"/>
</dbReference>
<dbReference type="GO" id="GO:0097241">
    <property type="term" value="P:hematopoietic stem cell migration to bone marrow"/>
    <property type="evidence" value="ECO:0000304"/>
    <property type="project" value="UniProtKB"/>
</dbReference>
<dbReference type="GO" id="GO:0008286">
    <property type="term" value="P:insulin receptor signaling pathway"/>
    <property type="evidence" value="ECO:0000314"/>
    <property type="project" value="UniProtKB"/>
</dbReference>
<dbReference type="GO" id="GO:0008285">
    <property type="term" value="P:negative regulation of cell population proliferation"/>
    <property type="evidence" value="ECO:0000314"/>
    <property type="project" value="UniProtKB"/>
</dbReference>
<dbReference type="GO" id="GO:0010897">
    <property type="term" value="P:negative regulation of triglyceride catabolic process"/>
    <property type="evidence" value="ECO:0000250"/>
    <property type="project" value="UniProtKB"/>
</dbReference>
<dbReference type="GO" id="GO:0001503">
    <property type="term" value="P:ossification"/>
    <property type="evidence" value="ECO:0000250"/>
    <property type="project" value="UniProtKB"/>
</dbReference>
<dbReference type="GO" id="GO:0046470">
    <property type="term" value="P:phosphatidylcholine metabolic process"/>
    <property type="evidence" value="ECO:0000250"/>
    <property type="project" value="UniProtKB"/>
</dbReference>
<dbReference type="GO" id="GO:0010694">
    <property type="term" value="P:positive regulation of alkaline phosphatase activity"/>
    <property type="evidence" value="ECO:0000250"/>
    <property type="project" value="UniProtKB"/>
</dbReference>
<dbReference type="GO" id="GO:0043065">
    <property type="term" value="P:positive regulation of apoptotic process"/>
    <property type="evidence" value="ECO:0000314"/>
    <property type="project" value="UniProtKB"/>
</dbReference>
<dbReference type="GO" id="GO:0010595">
    <property type="term" value="P:positive regulation of endothelial cell migration"/>
    <property type="evidence" value="ECO:0000315"/>
    <property type="project" value="UniProtKB"/>
</dbReference>
<dbReference type="GO" id="GO:0010907">
    <property type="term" value="P:positive regulation of glucose metabolic process"/>
    <property type="evidence" value="ECO:0000250"/>
    <property type="project" value="UniProtKB"/>
</dbReference>
<dbReference type="GO" id="GO:0010983">
    <property type="term" value="P:positive regulation of high-density lipoprotein particle clearance"/>
    <property type="evidence" value="ECO:0000250"/>
    <property type="project" value="UniProtKB"/>
</dbReference>
<dbReference type="GO" id="GO:0035774">
    <property type="term" value="P:positive regulation of insulin secretion involved in cellular response to glucose stimulus"/>
    <property type="evidence" value="ECO:0000250"/>
    <property type="project" value="UniProtKB"/>
</dbReference>
<dbReference type="GO" id="GO:0051044">
    <property type="term" value="P:positive regulation of membrane protein ectodomain proteolysis"/>
    <property type="evidence" value="ECO:0000314"/>
    <property type="project" value="UniProtKB"/>
</dbReference>
<dbReference type="GO" id="GO:0010867">
    <property type="term" value="P:positive regulation of triglyceride biosynthetic process"/>
    <property type="evidence" value="ECO:0000250"/>
    <property type="project" value="UniProtKB"/>
</dbReference>
<dbReference type="GO" id="GO:0009306">
    <property type="term" value="P:protein secretion"/>
    <property type="evidence" value="ECO:0000315"/>
    <property type="project" value="UniProtKB"/>
</dbReference>
<dbReference type="GO" id="GO:1900076">
    <property type="term" value="P:regulation of cellular response to insulin stimulus"/>
    <property type="evidence" value="ECO:0000314"/>
    <property type="project" value="UniProtKB"/>
</dbReference>
<dbReference type="GO" id="GO:0009749">
    <property type="term" value="P:response to glucose"/>
    <property type="evidence" value="ECO:0000314"/>
    <property type="project" value="UniProtKB"/>
</dbReference>
<dbReference type="GO" id="GO:0070633">
    <property type="term" value="P:transepithelial transport"/>
    <property type="evidence" value="ECO:0000250"/>
    <property type="project" value="UniProtKB"/>
</dbReference>
<dbReference type="FunFam" id="2.130.10.130:FF:000010">
    <property type="entry name" value="Glycosylphosphatidylinositol specific phospholipase D1"/>
    <property type="match status" value="1"/>
</dbReference>
<dbReference type="FunFam" id="2.130.10.130:FF:000011">
    <property type="entry name" value="Glycosylphosphatidylinositol specific phospholipase D1"/>
    <property type="match status" value="1"/>
</dbReference>
<dbReference type="Gene3D" id="2.130.10.130">
    <property type="entry name" value="Integrin alpha, N-terminal"/>
    <property type="match status" value="2"/>
</dbReference>
<dbReference type="InterPro" id="IPR013517">
    <property type="entry name" value="FG-GAP"/>
</dbReference>
<dbReference type="InterPro" id="IPR001028">
    <property type="entry name" value="Gprt_PLipase_D"/>
</dbReference>
<dbReference type="InterPro" id="IPR013519">
    <property type="entry name" value="Int_alpha_beta-p"/>
</dbReference>
<dbReference type="InterPro" id="IPR028994">
    <property type="entry name" value="Integrin_alpha_N"/>
</dbReference>
<dbReference type="InterPro" id="IPR029002">
    <property type="entry name" value="PLPC/GPLD1"/>
</dbReference>
<dbReference type="PANTHER" id="PTHR23221">
    <property type="entry name" value="GLYCOSYLPHOSPHATIDYLINOSITOL PHOSPHOLIPASE D"/>
    <property type="match status" value="1"/>
</dbReference>
<dbReference type="PANTHER" id="PTHR23221:SF7">
    <property type="entry name" value="PHOSPHATIDYLINOSITOL-GLYCAN-SPECIFIC PHOSPHOLIPASE D"/>
    <property type="match status" value="1"/>
</dbReference>
<dbReference type="Pfam" id="PF01839">
    <property type="entry name" value="FG-GAP"/>
    <property type="match status" value="3"/>
</dbReference>
<dbReference type="Pfam" id="PF00882">
    <property type="entry name" value="Zn_dep_PLPC"/>
    <property type="match status" value="1"/>
</dbReference>
<dbReference type="PRINTS" id="PR00718">
    <property type="entry name" value="PHPHLIPASED"/>
</dbReference>
<dbReference type="SMART" id="SM00191">
    <property type="entry name" value="Int_alpha"/>
    <property type="match status" value="5"/>
</dbReference>
<dbReference type="SUPFAM" id="SSF69318">
    <property type="entry name" value="Integrin alpha N-terminal domain"/>
    <property type="match status" value="1"/>
</dbReference>
<dbReference type="PROSITE" id="PS51470">
    <property type="entry name" value="FG_GAP"/>
    <property type="match status" value="7"/>
</dbReference>
<evidence type="ECO:0000255" key="1"/>
<evidence type="ECO:0000255" key="2">
    <source>
        <dbReference type="PROSITE-ProRule" id="PRU00803"/>
    </source>
</evidence>
<evidence type="ECO:0000269" key="3">
    <source>
    </source>
</evidence>
<evidence type="ECO:0000269" key="4">
    <source>
    </source>
</evidence>
<evidence type="ECO:0000269" key="5">
    <source>
    </source>
</evidence>
<evidence type="ECO:0000269" key="6">
    <source>
    </source>
</evidence>
<evidence type="ECO:0000269" key="7">
    <source ref="1"/>
</evidence>
<evidence type="ECO:0000269" key="8">
    <source ref="3"/>
</evidence>
<evidence type="ECO:0000303" key="9">
    <source>
    </source>
</evidence>
<evidence type="ECO:0000305" key="10"/>
<feature type="signal peptide">
    <location>
        <begin position="1"/>
        <end position="23"/>
    </location>
</feature>
<feature type="chain" id="PRO_0000022047" description="Phosphatidylinositol-glycan-specific phospholipase D">
    <location>
        <begin position="24"/>
        <end position="840"/>
    </location>
</feature>
<feature type="repeat" description="FG-GAP 1" evidence="2">
    <location>
        <begin position="367"/>
        <end position="428"/>
    </location>
</feature>
<feature type="repeat" description="FG-GAP 2" evidence="2">
    <location>
        <begin position="436"/>
        <end position="497"/>
    </location>
</feature>
<feature type="repeat" description="FG-GAP 3" evidence="2">
    <location>
        <begin position="499"/>
        <end position="559"/>
    </location>
</feature>
<feature type="repeat" description="FG-GAP 4" evidence="2">
    <location>
        <begin position="563"/>
        <end position="623"/>
    </location>
</feature>
<feature type="repeat" description="FG-GAP 5" evidence="2">
    <location>
        <begin position="633"/>
        <end position="693"/>
    </location>
</feature>
<feature type="repeat" description="FG-GAP 6" evidence="2">
    <location>
        <begin position="704"/>
        <end position="770"/>
    </location>
</feature>
<feature type="repeat" description="FG-GAP 7" evidence="2">
    <location>
        <begin position="788"/>
        <end position="840"/>
    </location>
</feature>
<feature type="glycosylation site" description="N-linked (GlcNAc...) asparagine" evidence="5">
    <location>
        <position position="94"/>
    </location>
</feature>
<feature type="glycosylation site" description="N-linked (GlcNAc...) asparagine" evidence="1">
    <location>
        <position position="271"/>
    </location>
</feature>
<feature type="glycosylation site" description="N-linked (GlcNAc...) asparagine" evidence="1">
    <location>
        <position position="292"/>
    </location>
</feature>
<feature type="glycosylation site" description="N-linked (GlcNAc...) asparagine" evidence="1">
    <location>
        <position position="307"/>
    </location>
</feature>
<feature type="glycosylation site" description="N-linked (GlcNAc...) asparagine" evidence="1">
    <location>
        <position position="321"/>
    </location>
</feature>
<feature type="glycosylation site" description="N-linked (GlcNAc...) asparagine" evidence="1">
    <location>
        <position position="501"/>
    </location>
</feature>
<feature type="glycosylation site" description="N-linked (GlcNAc...) asparagine" evidence="1">
    <location>
        <position position="568"/>
    </location>
</feature>
<feature type="glycosylation site" description="N-linked (GlcNAc...) asparagine" evidence="1">
    <location>
        <position position="591"/>
    </location>
</feature>
<feature type="glycosylation site" description="N-linked (GlcNAc...) asparagine" evidence="1">
    <location>
        <position position="604"/>
    </location>
</feature>
<feature type="glycosylation site" description="N-linked (GlcNAc...) asparagine" evidence="6">
    <location>
        <position position="659"/>
    </location>
</feature>
<feature type="splice variant" id="VSP_023261" description="In isoform 2." evidence="9">
    <original>GDVLSQFEFNFN</original>
    <variation>TVYLHLLNFLVV</variation>
    <location>
        <begin position="165"/>
        <end position="176"/>
    </location>
</feature>
<feature type="splice variant" id="VSP_023262" description="In isoform 2." evidence="9">
    <location>
        <begin position="177"/>
        <end position="840"/>
    </location>
</feature>
<feature type="sequence variant" id="VAR_030743" description="In dbSNP:rs2235501." evidence="4">
    <original>L</original>
    <variation>V</variation>
    <location>
        <position position="17"/>
    </location>
</feature>
<feature type="sequence variant" id="VAR_030744" description="In dbSNP:rs1126617." evidence="3 4 7">
    <original>V</original>
    <variation>I</variation>
    <location>
        <position position="30"/>
    </location>
</feature>
<feature type="sequence variant" id="VAR_030745" description="In dbSNP:rs17300770.">
    <original>D</original>
    <variation>E</variation>
    <location>
        <position position="275"/>
    </location>
</feature>
<feature type="sequence variant" id="VAR_051278" description="In dbSNP:rs1062496." evidence="7">
    <original>I</original>
    <variation>V</variation>
    <location>
        <position position="350"/>
    </location>
</feature>
<feature type="sequence variant" id="VAR_030746" description="In dbSNP:rs6924628.">
    <original>G</original>
    <variation>S</variation>
    <location>
        <position position="396"/>
    </location>
</feature>
<feature type="sequence variant" id="VAR_030747" description="In dbSNP:rs1062505." evidence="7">
    <original>V</original>
    <variation>M</variation>
    <location>
        <position position="461"/>
    </location>
</feature>
<feature type="sequence variant" id="VAR_030748" description="In dbSNP:rs1042303." evidence="3">
    <original>M</original>
    <variation>V</variation>
    <location>
        <position position="694"/>
    </location>
</feature>
<feature type="sequence variant" id="VAR_030749" description="In dbSNP:rs1772256." evidence="3 4 7 8">
    <original>T</original>
    <variation>I</variation>
    <location>
        <position position="698"/>
    </location>
</feature>
<feature type="sequence conflict" description="In Ref. 6; AA sequence." evidence="10" ref="6">
    <original>VIGS</original>
    <variation>MLGT</variation>
    <location>
        <begin position="531"/>
        <end position="534"/>
    </location>
</feature>
<organism>
    <name type="scientific">Homo sapiens</name>
    <name type="common">Human</name>
    <dbReference type="NCBI Taxonomy" id="9606"/>
    <lineage>
        <taxon>Eukaryota</taxon>
        <taxon>Metazoa</taxon>
        <taxon>Chordata</taxon>
        <taxon>Craniata</taxon>
        <taxon>Vertebrata</taxon>
        <taxon>Euteleostomi</taxon>
        <taxon>Mammalia</taxon>
        <taxon>Eutheria</taxon>
        <taxon>Euarchontoglires</taxon>
        <taxon>Primates</taxon>
        <taxon>Haplorrhini</taxon>
        <taxon>Catarrhini</taxon>
        <taxon>Hominidae</taxon>
        <taxon>Homo</taxon>
    </lineage>
</organism>
<proteinExistence type="evidence at protein level"/>
<sequence>MSAFRLWPGLLIMLGSLCHRGSPCGLSTHVEIGHRALEFLQLHNGRVNYRELLLEHQDAYQAGIVFPDCFYPSICKGGKFHDVSESTHWTPFLNASVHYIRENYPLPWEKDTEKLVAFLFGITSHMAADVSWHSLGLEQGFLRTMGAIDFHGSYSEAHSAGDFGGDVLSQFEFNFNYLARRWYVPVKDLLGIYEKLYGRKVITENVIVDCSHIQFLEMYGEMLAVSKLYPTYSTKSPFLVEQFQEYFLGGLDDMAFWSTNIYHLTSFMLENGTSDCNLPENPLFIACGGQQNHTQGSKMQKNDFHRNLTTSLTESVDRNINYTERGVFFSVNSWTPDSMSFIYKALERNIRTMFIGGSQLSQKHVSSPLASYFLSFPYARLGWAMTSADLNQDGHGDLVVGAPGYSRPGHIHIGRVYLIYGNDLGLPPVDLDLDKEAHRILEGFQPSGRFGSALAVLDFNVDGVPDLAVGAPSVGSEQLTYKGAVYVYFGSKQGGMSSSPNITISCQDIYCNLGWTLLAADVNGDSEPDLVIGSPFAPGGGKQKGIVAAFYSGPSLSDKEKLNVEAANWTVRGEEDFSWFGYSLHGVTVDNRTLLLVGSPTWKNASRLGHLLHIRDEKKSLGRVYGYFPPNGQSWFTISGDKAMGKLGTSLSSGHVLMNGTLKQVLLVGAPTYDDVSKVAFLTVTLHQGGATRMYALTSDAQPLLLSTFSGDRRFSRFGGVLHLSDLDDDGLDEIIMAAPLRIADVTSGLIGGEDGRVYVYNGKETTLGDMTGKCKSWITPCPEEKAQYVLISPEASSRFGSSLITVRSKAKNQVVIAAGRSSLGARLSGALHVYSLGSD</sequence>
<protein>
    <recommendedName>
        <fullName>Phosphatidylinositol-glycan-specific phospholipase D</fullName>
        <shortName>PI-G PLD</shortName>
        <ecNumber>3.1.4.50</ecNumber>
    </recommendedName>
    <alternativeName>
        <fullName>Glycoprotein phospholipase D</fullName>
    </alternativeName>
    <alternativeName>
        <fullName>Glycosyl-phosphatidylinositol-specific phospholipase D</fullName>
        <shortName>GPI-PLD</shortName>
        <shortName>GPI-specific phospholipase D</shortName>
    </alternativeName>
</protein>